<protein>
    <recommendedName>
        <fullName>Probable coenzyme A transferase subunit alpha</fullName>
        <ecNumber>2.8.3.-</ecNumber>
    </recommendedName>
    <alternativeName>
        <fullName>Probable CoA-transferase subunit alpha</fullName>
    </alternativeName>
</protein>
<evidence type="ECO:0000250" key="1"/>
<evidence type="ECO:0000255" key="2"/>
<evidence type="ECO:0000305" key="3"/>
<reference key="1">
    <citation type="journal article" date="1998" name="DNA Res.">
        <title>Sequence analysis of the Bacillus subtilis 168 chromosome region between the sspC and odhA loci (184 degrees-180 degrees).</title>
        <authorList>
            <person name="Ghim S.-Y."/>
            <person name="Choi S.-K."/>
            <person name="Shin B.-S."/>
            <person name="Jeong Y.-M."/>
            <person name="Sorokin A."/>
            <person name="Ehrlich S.D."/>
            <person name="Park S.-H."/>
        </authorList>
    </citation>
    <scope>NUCLEOTIDE SEQUENCE [GENOMIC DNA]</scope>
    <source>
        <strain>168</strain>
    </source>
</reference>
<reference key="2">
    <citation type="journal article" date="1997" name="Nature">
        <title>The complete genome sequence of the Gram-positive bacterium Bacillus subtilis.</title>
        <authorList>
            <person name="Kunst F."/>
            <person name="Ogasawara N."/>
            <person name="Moszer I."/>
            <person name="Albertini A.M."/>
            <person name="Alloni G."/>
            <person name="Azevedo V."/>
            <person name="Bertero M.G."/>
            <person name="Bessieres P."/>
            <person name="Bolotin A."/>
            <person name="Borchert S."/>
            <person name="Borriss R."/>
            <person name="Boursier L."/>
            <person name="Brans A."/>
            <person name="Braun M."/>
            <person name="Brignell S.C."/>
            <person name="Bron S."/>
            <person name="Brouillet S."/>
            <person name="Bruschi C.V."/>
            <person name="Caldwell B."/>
            <person name="Capuano V."/>
            <person name="Carter N.M."/>
            <person name="Choi S.-K."/>
            <person name="Codani J.-J."/>
            <person name="Connerton I.F."/>
            <person name="Cummings N.J."/>
            <person name="Daniel R.A."/>
            <person name="Denizot F."/>
            <person name="Devine K.M."/>
            <person name="Duesterhoeft A."/>
            <person name="Ehrlich S.D."/>
            <person name="Emmerson P.T."/>
            <person name="Entian K.-D."/>
            <person name="Errington J."/>
            <person name="Fabret C."/>
            <person name="Ferrari E."/>
            <person name="Foulger D."/>
            <person name="Fritz C."/>
            <person name="Fujita M."/>
            <person name="Fujita Y."/>
            <person name="Fuma S."/>
            <person name="Galizzi A."/>
            <person name="Galleron N."/>
            <person name="Ghim S.-Y."/>
            <person name="Glaser P."/>
            <person name="Goffeau A."/>
            <person name="Golightly E.J."/>
            <person name="Grandi G."/>
            <person name="Guiseppi G."/>
            <person name="Guy B.J."/>
            <person name="Haga K."/>
            <person name="Haiech J."/>
            <person name="Harwood C.R."/>
            <person name="Henaut A."/>
            <person name="Hilbert H."/>
            <person name="Holsappel S."/>
            <person name="Hosono S."/>
            <person name="Hullo M.-F."/>
            <person name="Itaya M."/>
            <person name="Jones L.-M."/>
            <person name="Joris B."/>
            <person name="Karamata D."/>
            <person name="Kasahara Y."/>
            <person name="Klaerr-Blanchard M."/>
            <person name="Klein C."/>
            <person name="Kobayashi Y."/>
            <person name="Koetter P."/>
            <person name="Koningstein G."/>
            <person name="Krogh S."/>
            <person name="Kumano M."/>
            <person name="Kurita K."/>
            <person name="Lapidus A."/>
            <person name="Lardinois S."/>
            <person name="Lauber J."/>
            <person name="Lazarevic V."/>
            <person name="Lee S.-M."/>
            <person name="Levine A."/>
            <person name="Liu H."/>
            <person name="Masuda S."/>
            <person name="Mauel C."/>
            <person name="Medigue C."/>
            <person name="Medina N."/>
            <person name="Mellado R.P."/>
            <person name="Mizuno M."/>
            <person name="Moestl D."/>
            <person name="Nakai S."/>
            <person name="Noback M."/>
            <person name="Noone D."/>
            <person name="O'Reilly M."/>
            <person name="Ogawa K."/>
            <person name="Ogiwara A."/>
            <person name="Oudega B."/>
            <person name="Park S.-H."/>
            <person name="Parro V."/>
            <person name="Pohl T.M."/>
            <person name="Portetelle D."/>
            <person name="Porwollik S."/>
            <person name="Prescott A.M."/>
            <person name="Presecan E."/>
            <person name="Pujic P."/>
            <person name="Purnelle B."/>
            <person name="Rapoport G."/>
            <person name="Rey M."/>
            <person name="Reynolds S."/>
            <person name="Rieger M."/>
            <person name="Rivolta C."/>
            <person name="Rocha E."/>
            <person name="Roche B."/>
            <person name="Rose M."/>
            <person name="Sadaie Y."/>
            <person name="Sato T."/>
            <person name="Scanlan E."/>
            <person name="Schleich S."/>
            <person name="Schroeter R."/>
            <person name="Scoffone F."/>
            <person name="Sekiguchi J."/>
            <person name="Sekowska A."/>
            <person name="Seror S.J."/>
            <person name="Serror P."/>
            <person name="Shin B.-S."/>
            <person name="Soldo B."/>
            <person name="Sorokin A."/>
            <person name="Tacconi E."/>
            <person name="Takagi T."/>
            <person name="Takahashi H."/>
            <person name="Takemaru K."/>
            <person name="Takeuchi M."/>
            <person name="Tamakoshi A."/>
            <person name="Tanaka T."/>
            <person name="Terpstra P."/>
            <person name="Tognoni A."/>
            <person name="Tosato V."/>
            <person name="Uchiyama S."/>
            <person name="Vandenbol M."/>
            <person name="Vannier F."/>
            <person name="Vassarotti A."/>
            <person name="Viari A."/>
            <person name="Wambutt R."/>
            <person name="Wedler E."/>
            <person name="Wedler H."/>
            <person name="Weitzenegger T."/>
            <person name="Winters P."/>
            <person name="Wipat A."/>
            <person name="Yamamoto H."/>
            <person name="Yamane K."/>
            <person name="Yasumoto K."/>
            <person name="Yata K."/>
            <person name="Yoshida K."/>
            <person name="Yoshikawa H.-F."/>
            <person name="Zumstein E."/>
            <person name="Yoshikawa H."/>
            <person name="Danchin A."/>
        </authorList>
    </citation>
    <scope>NUCLEOTIDE SEQUENCE [LARGE SCALE GENOMIC DNA]</scope>
    <source>
        <strain>168</strain>
    </source>
</reference>
<dbReference type="EC" id="2.8.3.-"/>
<dbReference type="EMBL" id="AF015775">
    <property type="protein sequence ID" value="AAB72073.1"/>
    <property type="molecule type" value="Genomic_DNA"/>
</dbReference>
<dbReference type="EMBL" id="AF006665">
    <property type="protein sequence ID" value="AAB81155.1"/>
    <property type="molecule type" value="Genomic_DNA"/>
</dbReference>
<dbReference type="EMBL" id="AL009126">
    <property type="protein sequence ID" value="CAB13864.1"/>
    <property type="molecule type" value="Genomic_DNA"/>
</dbReference>
<dbReference type="PIR" id="E69904">
    <property type="entry name" value="E69904"/>
</dbReference>
<dbReference type="RefSeq" id="NP_389854.1">
    <property type="nucleotide sequence ID" value="NC_000964.3"/>
</dbReference>
<dbReference type="RefSeq" id="WP_003230839.1">
    <property type="nucleotide sequence ID" value="NZ_OZ025638.1"/>
</dbReference>
<dbReference type="SMR" id="O34317"/>
<dbReference type="FunCoup" id="O34317">
    <property type="interactions" value="61"/>
</dbReference>
<dbReference type="STRING" id="224308.BSU19730"/>
<dbReference type="PaxDb" id="224308-BSU19730"/>
<dbReference type="EnsemblBacteria" id="CAB13864">
    <property type="protein sequence ID" value="CAB13864"/>
    <property type="gene ID" value="BSU_19730"/>
</dbReference>
<dbReference type="GeneID" id="940052"/>
<dbReference type="KEGG" id="bsu:BSU19730"/>
<dbReference type="PATRIC" id="fig|224308.179.peg.2160"/>
<dbReference type="eggNOG" id="COG1788">
    <property type="taxonomic scope" value="Bacteria"/>
</dbReference>
<dbReference type="InParanoid" id="O34317"/>
<dbReference type="OrthoDB" id="9777193at2"/>
<dbReference type="PhylomeDB" id="O34317"/>
<dbReference type="BioCyc" id="BSUB:BSU19730-MONOMER"/>
<dbReference type="Proteomes" id="UP000001570">
    <property type="component" value="Chromosome"/>
</dbReference>
<dbReference type="GO" id="GO:0008410">
    <property type="term" value="F:CoA-transferase activity"/>
    <property type="evidence" value="ECO:0000318"/>
    <property type="project" value="GO_Central"/>
</dbReference>
<dbReference type="Gene3D" id="3.40.1080.10">
    <property type="entry name" value="Glutaconate Coenzyme A-transferase"/>
    <property type="match status" value="1"/>
</dbReference>
<dbReference type="InterPro" id="IPR012792">
    <property type="entry name" value="3-oxoacid_CoA-transf_A"/>
</dbReference>
<dbReference type="InterPro" id="IPR004165">
    <property type="entry name" value="CoA_trans_fam_I"/>
</dbReference>
<dbReference type="InterPro" id="IPR004163">
    <property type="entry name" value="CoA_transf_BS"/>
</dbReference>
<dbReference type="InterPro" id="IPR037171">
    <property type="entry name" value="NagB/RpiA_transferase-like"/>
</dbReference>
<dbReference type="NCBIfam" id="TIGR02429">
    <property type="entry name" value="pcaI_scoA_fam"/>
    <property type="match status" value="1"/>
</dbReference>
<dbReference type="PANTHER" id="PTHR13707:SF60">
    <property type="entry name" value="ACETATE COA-TRANSFERASE SUBUNIT ALPHA"/>
    <property type="match status" value="1"/>
</dbReference>
<dbReference type="PANTHER" id="PTHR13707">
    <property type="entry name" value="KETOACID-COENZYME A TRANSFERASE"/>
    <property type="match status" value="1"/>
</dbReference>
<dbReference type="Pfam" id="PF01144">
    <property type="entry name" value="CoA_trans"/>
    <property type="match status" value="1"/>
</dbReference>
<dbReference type="SMART" id="SM00882">
    <property type="entry name" value="CoA_trans"/>
    <property type="match status" value="1"/>
</dbReference>
<dbReference type="SUPFAM" id="SSF100950">
    <property type="entry name" value="NagB/RpiA/CoA transferase-like"/>
    <property type="match status" value="1"/>
</dbReference>
<dbReference type="PROSITE" id="PS01273">
    <property type="entry name" value="COA_TRANSF_1"/>
    <property type="match status" value="1"/>
</dbReference>
<name>YODS_BACSU</name>
<proteinExistence type="inferred from homology"/>
<organism>
    <name type="scientific">Bacillus subtilis (strain 168)</name>
    <dbReference type="NCBI Taxonomy" id="224308"/>
    <lineage>
        <taxon>Bacteria</taxon>
        <taxon>Bacillati</taxon>
        <taxon>Bacillota</taxon>
        <taxon>Bacilli</taxon>
        <taxon>Bacillales</taxon>
        <taxon>Bacillaceae</taxon>
        <taxon>Bacillus</taxon>
    </lineage>
</organism>
<gene>
    <name type="primary">yodS</name>
    <name type="synonym">yokN</name>
    <name type="ordered locus">BSU19730</name>
</gene>
<accession>O34317</accession>
<accession>Q796B1</accession>
<feature type="chain" id="PRO_0000390780" description="Probable coenzyme A transferase subunit alpha">
    <location>
        <begin position="1"/>
        <end position="229"/>
    </location>
</feature>
<feature type="binding site" evidence="2">
    <location>
        <begin position="26"/>
        <end position="32"/>
    </location>
    <ligand>
        <name>CoA</name>
        <dbReference type="ChEBI" id="CHEBI:57287"/>
    </ligand>
</feature>
<sequence>MAPFQKAISIDTAIADVRDGSVLMFGGFGGVGSPPSLIEAILDSGVTDLTVICNDAGFPDIGIGPLIVNQRVKTLIASHIGSNPVAGKQMTEGTLEVQFSPQGTLAERIRAGGAGLGGILTDVGIDNQMVCEKKDIVTVAGKRYLIEEALTADFAFINAYIADEFGNLTYDKTARNMNPLMAMAARRTFAEAERIVPMGEISEEMIVTPGVFVEGVVRSEGVKWKWAWE</sequence>
<keyword id="KW-1185">Reference proteome</keyword>
<keyword id="KW-0808">Transferase</keyword>
<comment type="subunit">
    <text evidence="1">Heterodimer of a subunit alpha and a subunit beta.</text>
</comment>
<comment type="similarity">
    <text evidence="3">Belongs to the 3-oxoacid CoA-transferase subunit A family.</text>
</comment>